<name>MSHC_STRRD</name>
<keyword id="KW-0067">ATP-binding</keyword>
<keyword id="KW-0436">Ligase</keyword>
<keyword id="KW-0479">Metal-binding</keyword>
<keyword id="KW-0547">Nucleotide-binding</keyword>
<keyword id="KW-1185">Reference proteome</keyword>
<keyword id="KW-0862">Zinc</keyword>
<reference key="1">
    <citation type="journal article" date="2010" name="Stand. Genomic Sci.">
        <title>Complete genome sequence of Streptosporangium roseum type strain (NI 9100).</title>
        <authorList>
            <person name="Nolan M."/>
            <person name="Sikorski J."/>
            <person name="Jando M."/>
            <person name="Lucas S."/>
            <person name="Lapidus A."/>
            <person name="Glavina Del Rio T."/>
            <person name="Chen F."/>
            <person name="Tice H."/>
            <person name="Pitluck S."/>
            <person name="Cheng J.F."/>
            <person name="Chertkov O."/>
            <person name="Sims D."/>
            <person name="Meincke L."/>
            <person name="Brettin T."/>
            <person name="Han C."/>
            <person name="Detter J.C."/>
            <person name="Bruce D."/>
            <person name="Goodwin L."/>
            <person name="Land M."/>
            <person name="Hauser L."/>
            <person name="Chang Y.J."/>
            <person name="Jeffries C.D."/>
            <person name="Ivanova N."/>
            <person name="Mavromatis K."/>
            <person name="Mikhailova N."/>
            <person name="Chen A."/>
            <person name="Palaniappan K."/>
            <person name="Chain P."/>
            <person name="Rohde M."/>
            <person name="Goker M."/>
            <person name="Bristow J."/>
            <person name="Eisen J.A."/>
            <person name="Markowitz V."/>
            <person name="Hugenholtz P."/>
            <person name="Kyrpides N.C."/>
            <person name="Klenk H.P."/>
        </authorList>
    </citation>
    <scope>NUCLEOTIDE SEQUENCE [LARGE SCALE GENOMIC DNA]</scope>
    <source>
        <strain>ATCC 12428 / DSM 43021 / JCM 3005 / KCTC 9067 / NCIMB 10171 / NRRL 2505 / NI 9100</strain>
    </source>
</reference>
<gene>
    <name evidence="1" type="primary">mshC</name>
    <name type="ordered locus">Sros_5930</name>
</gene>
<comment type="function">
    <text evidence="1">Catalyzes the ATP-dependent condensation of GlcN-Ins and L-cysteine to form L-Cys-GlcN-Ins.</text>
</comment>
<comment type="catalytic activity">
    <reaction evidence="1">
        <text>1D-myo-inositol 2-amino-2-deoxy-alpha-D-glucopyranoside + L-cysteine + ATP = 1D-myo-inositol 2-(L-cysteinylamino)-2-deoxy-alpha-D-glucopyranoside + AMP + diphosphate + H(+)</text>
        <dbReference type="Rhea" id="RHEA:26176"/>
        <dbReference type="ChEBI" id="CHEBI:15378"/>
        <dbReference type="ChEBI" id="CHEBI:30616"/>
        <dbReference type="ChEBI" id="CHEBI:33019"/>
        <dbReference type="ChEBI" id="CHEBI:35235"/>
        <dbReference type="ChEBI" id="CHEBI:58886"/>
        <dbReference type="ChEBI" id="CHEBI:58887"/>
        <dbReference type="ChEBI" id="CHEBI:456215"/>
        <dbReference type="EC" id="6.3.1.13"/>
    </reaction>
</comment>
<comment type="cofactor">
    <cofactor evidence="1">
        <name>Zn(2+)</name>
        <dbReference type="ChEBI" id="CHEBI:29105"/>
    </cofactor>
    <text evidence="1">Binds 1 zinc ion per subunit.</text>
</comment>
<comment type="subunit">
    <text evidence="1">Monomer.</text>
</comment>
<comment type="similarity">
    <text evidence="1">Belongs to the class-I aminoacyl-tRNA synthetase family. MshC subfamily.</text>
</comment>
<protein>
    <recommendedName>
        <fullName evidence="1">L-cysteine:1D-myo-inositol 2-amino-2-deoxy-alpha-D-glucopyranoside ligase</fullName>
        <shortName evidence="1">L-Cys:GlcN-Ins ligase</shortName>
        <ecNumber evidence="1">6.3.1.13</ecNumber>
    </recommendedName>
    <alternativeName>
        <fullName evidence="1">Mycothiol ligase</fullName>
        <shortName evidence="1">MSH ligase</shortName>
    </alternativeName>
</protein>
<evidence type="ECO:0000255" key="1">
    <source>
        <dbReference type="HAMAP-Rule" id="MF_01697"/>
    </source>
</evidence>
<accession>D2AU10</accession>
<feature type="chain" id="PRO_0000400489" description="L-cysteine:1D-myo-inositol 2-amino-2-deoxy-alpha-D-glucopyranoside ligase">
    <location>
        <begin position="1"/>
        <end position="407"/>
    </location>
</feature>
<feature type="short sequence motif" description="'HIGH' region" evidence="1">
    <location>
        <begin position="45"/>
        <end position="55"/>
    </location>
</feature>
<feature type="short sequence motif" description="'ERGGDP' region" evidence="1">
    <location>
        <begin position="183"/>
        <end position="188"/>
    </location>
</feature>
<feature type="short sequence motif" description="'KMSKS' region" evidence="1">
    <location>
        <begin position="285"/>
        <end position="289"/>
    </location>
</feature>
<feature type="binding site" evidence="1">
    <location>
        <begin position="43"/>
        <end position="46"/>
    </location>
    <ligand>
        <name>L-cysteinyl-5'-AMP</name>
        <dbReference type="ChEBI" id="CHEBI:144924"/>
    </ligand>
</feature>
<feature type="binding site" evidence="1">
    <location>
        <position position="43"/>
    </location>
    <ligand>
        <name>Zn(2+)</name>
        <dbReference type="ChEBI" id="CHEBI:29105"/>
    </ligand>
</feature>
<feature type="binding site" evidence="1">
    <location>
        <position position="58"/>
    </location>
    <ligand>
        <name>L-cysteinyl-5'-AMP</name>
        <dbReference type="ChEBI" id="CHEBI:144924"/>
    </ligand>
</feature>
<feature type="binding site" evidence="1">
    <location>
        <begin position="81"/>
        <end position="83"/>
    </location>
    <ligand>
        <name>L-cysteinyl-5'-AMP</name>
        <dbReference type="ChEBI" id="CHEBI:144924"/>
    </ligand>
</feature>
<feature type="binding site" evidence="1">
    <location>
        <position position="223"/>
    </location>
    <ligand>
        <name>L-cysteinyl-5'-AMP</name>
        <dbReference type="ChEBI" id="CHEBI:144924"/>
    </ligand>
</feature>
<feature type="binding site" evidence="1">
    <location>
        <position position="227"/>
    </location>
    <ligand>
        <name>Zn(2+)</name>
        <dbReference type="ChEBI" id="CHEBI:29105"/>
    </ligand>
</feature>
<feature type="binding site" evidence="1">
    <location>
        <begin position="245"/>
        <end position="247"/>
    </location>
    <ligand>
        <name>L-cysteinyl-5'-AMP</name>
        <dbReference type="ChEBI" id="CHEBI:144924"/>
    </ligand>
</feature>
<feature type="binding site" evidence="1">
    <location>
        <position position="252"/>
    </location>
    <ligand>
        <name>Zn(2+)</name>
        <dbReference type="ChEBI" id="CHEBI:29105"/>
    </ligand>
</feature>
<feature type="binding site" evidence="1">
    <location>
        <position position="279"/>
    </location>
    <ligand>
        <name>L-cysteinyl-5'-AMP</name>
        <dbReference type="ChEBI" id="CHEBI:144924"/>
    </ligand>
</feature>
<sequence>MRSWSAPKVPRLPGVGAPLRLFDTAAGEVGPTQPGPTARLYVCGITPYDATHLGHANTYLAFDLVNRLWRDAGHEVHFTQNATDVDDPLLERAEQTGQDWRELAEREIELFRTDMEALRILPPREYVGVTEVIDQVAELIELLRDKGATYDLDGDLYFDVAAAPKFGAVSGYSEERMLDLFGQRGGDPDRAGKKHPLDWLLWRAERPGEPSWPSPFGQGRPGWHIECTAIALANLGSGFDVAGGGSDLIFPHHECGAHEGHVACGEWPFAKAYVHAGMVALDGEKMSKSKGNLVFVSRLRKEADPMAIRLALLAHHYRSDWEWTADQLASAEVRLARWRSAVGLPAGPEAETVLAELRARMTDDLDAPGALAVVDAWADRALAGGGTDPGAPALVRDIVDALLGVEL</sequence>
<proteinExistence type="inferred from homology"/>
<dbReference type="EC" id="6.3.1.13" evidence="1"/>
<dbReference type="EMBL" id="CP001814">
    <property type="protein sequence ID" value="ACZ88665.1"/>
    <property type="molecule type" value="Genomic_DNA"/>
</dbReference>
<dbReference type="RefSeq" id="WP_012892400.1">
    <property type="nucleotide sequence ID" value="NC_013595.1"/>
</dbReference>
<dbReference type="SMR" id="D2AU10"/>
<dbReference type="STRING" id="479432.Sros_5930"/>
<dbReference type="KEGG" id="sro:Sros_5930"/>
<dbReference type="eggNOG" id="COG0215">
    <property type="taxonomic scope" value="Bacteria"/>
</dbReference>
<dbReference type="HOGENOM" id="CLU_013528_0_0_11"/>
<dbReference type="OrthoDB" id="9815130at2"/>
<dbReference type="Proteomes" id="UP000002029">
    <property type="component" value="Chromosome"/>
</dbReference>
<dbReference type="GO" id="GO:0005829">
    <property type="term" value="C:cytosol"/>
    <property type="evidence" value="ECO:0007669"/>
    <property type="project" value="TreeGrafter"/>
</dbReference>
<dbReference type="GO" id="GO:0005524">
    <property type="term" value="F:ATP binding"/>
    <property type="evidence" value="ECO:0007669"/>
    <property type="project" value="UniProtKB-KW"/>
</dbReference>
<dbReference type="GO" id="GO:0035446">
    <property type="term" value="F:cysteine-glucosaminylinositol ligase activity"/>
    <property type="evidence" value="ECO:0007669"/>
    <property type="project" value="UniProtKB-UniRule"/>
</dbReference>
<dbReference type="GO" id="GO:0004817">
    <property type="term" value="F:cysteine-tRNA ligase activity"/>
    <property type="evidence" value="ECO:0007669"/>
    <property type="project" value="TreeGrafter"/>
</dbReference>
<dbReference type="GO" id="GO:0008270">
    <property type="term" value="F:zinc ion binding"/>
    <property type="evidence" value="ECO:0007669"/>
    <property type="project" value="UniProtKB-UniRule"/>
</dbReference>
<dbReference type="GO" id="GO:0006423">
    <property type="term" value="P:cysteinyl-tRNA aminoacylation"/>
    <property type="evidence" value="ECO:0007669"/>
    <property type="project" value="TreeGrafter"/>
</dbReference>
<dbReference type="GO" id="GO:0010125">
    <property type="term" value="P:mycothiol biosynthetic process"/>
    <property type="evidence" value="ECO:0007669"/>
    <property type="project" value="UniProtKB-UniRule"/>
</dbReference>
<dbReference type="CDD" id="cd07955">
    <property type="entry name" value="Anticodon_Ia_Cys_like"/>
    <property type="match status" value="1"/>
</dbReference>
<dbReference type="CDD" id="cd00672">
    <property type="entry name" value="CysRS_core"/>
    <property type="match status" value="1"/>
</dbReference>
<dbReference type="FunFam" id="3.40.50.620:FF:000134">
    <property type="entry name" value="L-cysteine:1D-myo-inositol 2-amino-2-deoxy-alpha-D-glucopyranoside ligase"/>
    <property type="match status" value="1"/>
</dbReference>
<dbReference type="Gene3D" id="1.20.120.640">
    <property type="entry name" value="Anticodon-binding domain of a subclass of class I aminoacyl-tRNA synthetases"/>
    <property type="match status" value="1"/>
</dbReference>
<dbReference type="Gene3D" id="3.40.50.620">
    <property type="entry name" value="HUPs"/>
    <property type="match status" value="1"/>
</dbReference>
<dbReference type="HAMAP" id="MF_01697">
    <property type="entry name" value="MshC"/>
    <property type="match status" value="1"/>
</dbReference>
<dbReference type="InterPro" id="IPR024909">
    <property type="entry name" value="Cys-tRNA/MSH_ligase"/>
</dbReference>
<dbReference type="InterPro" id="IPR017812">
    <property type="entry name" value="Mycothiol_ligase_MshC"/>
</dbReference>
<dbReference type="InterPro" id="IPR014729">
    <property type="entry name" value="Rossmann-like_a/b/a_fold"/>
</dbReference>
<dbReference type="InterPro" id="IPR032678">
    <property type="entry name" value="tRNA-synt_1_cat_dom"/>
</dbReference>
<dbReference type="NCBIfam" id="TIGR03447">
    <property type="entry name" value="mycothiol_MshC"/>
    <property type="match status" value="1"/>
</dbReference>
<dbReference type="PANTHER" id="PTHR10890:SF3">
    <property type="entry name" value="CYSTEINE--TRNA LIGASE, CYTOPLASMIC"/>
    <property type="match status" value="1"/>
</dbReference>
<dbReference type="PANTHER" id="PTHR10890">
    <property type="entry name" value="CYSTEINYL-TRNA SYNTHETASE"/>
    <property type="match status" value="1"/>
</dbReference>
<dbReference type="Pfam" id="PF01406">
    <property type="entry name" value="tRNA-synt_1e"/>
    <property type="match status" value="1"/>
</dbReference>
<dbReference type="PRINTS" id="PR00983">
    <property type="entry name" value="TRNASYNTHCYS"/>
</dbReference>
<dbReference type="SUPFAM" id="SSF52374">
    <property type="entry name" value="Nucleotidylyl transferase"/>
    <property type="match status" value="1"/>
</dbReference>
<organism>
    <name type="scientific">Streptosporangium roseum (strain ATCC 12428 / DSM 43021 / JCM 3005 / KCTC 9067 / NCIMB 10171 / NRRL 2505 / NI 9100)</name>
    <dbReference type="NCBI Taxonomy" id="479432"/>
    <lineage>
        <taxon>Bacteria</taxon>
        <taxon>Bacillati</taxon>
        <taxon>Actinomycetota</taxon>
        <taxon>Actinomycetes</taxon>
        <taxon>Streptosporangiales</taxon>
        <taxon>Streptosporangiaceae</taxon>
        <taxon>Streptosporangium</taxon>
    </lineage>
</organism>